<proteinExistence type="inferred from homology"/>
<protein>
    <recommendedName>
        <fullName>Probable dipeptidase PepE</fullName>
        <ecNumber>3.4.13.-</ecNumber>
    </recommendedName>
</protein>
<dbReference type="EC" id="3.4.13.-"/>
<dbReference type="EMBL" id="AE000516">
    <property type="protein sequence ID" value="AAK46431.1"/>
    <property type="molecule type" value="Genomic_DNA"/>
</dbReference>
<dbReference type="PIR" id="D70767">
    <property type="entry name" value="D70767"/>
</dbReference>
<dbReference type="RefSeq" id="WP_003410743.1">
    <property type="nucleotide sequence ID" value="NZ_KK341227.1"/>
</dbReference>
<dbReference type="SMR" id="P9WHS6"/>
<dbReference type="KEGG" id="mtc:MT2150"/>
<dbReference type="PATRIC" id="fig|83331.31.peg.2319"/>
<dbReference type="HOGENOM" id="CLU_017266_4_1_11"/>
<dbReference type="Proteomes" id="UP000001020">
    <property type="component" value="Chromosome"/>
</dbReference>
<dbReference type="GO" id="GO:0005886">
    <property type="term" value="C:plasma membrane"/>
    <property type="evidence" value="ECO:0007669"/>
    <property type="project" value="UniProtKB-SubCell"/>
</dbReference>
<dbReference type="GO" id="GO:0016787">
    <property type="term" value="F:hydrolase activity"/>
    <property type="evidence" value="ECO:0007669"/>
    <property type="project" value="UniProtKB-KW"/>
</dbReference>
<dbReference type="GO" id="GO:0046872">
    <property type="term" value="F:metal ion binding"/>
    <property type="evidence" value="ECO:0007669"/>
    <property type="project" value="UniProtKB-KW"/>
</dbReference>
<dbReference type="CDD" id="cd01092">
    <property type="entry name" value="APP-like"/>
    <property type="match status" value="1"/>
</dbReference>
<dbReference type="Gene3D" id="3.90.230.10">
    <property type="entry name" value="Creatinase/methionine aminopeptidase superfamily"/>
    <property type="match status" value="1"/>
</dbReference>
<dbReference type="Gene3D" id="3.40.350.10">
    <property type="entry name" value="Creatinase/prolidase N-terminal domain"/>
    <property type="match status" value="1"/>
</dbReference>
<dbReference type="InterPro" id="IPR029149">
    <property type="entry name" value="Creatin/AminoP/Spt16_N"/>
</dbReference>
<dbReference type="InterPro" id="IPR036005">
    <property type="entry name" value="Creatinase/aminopeptidase-like"/>
</dbReference>
<dbReference type="InterPro" id="IPR000587">
    <property type="entry name" value="Creatinase_N"/>
</dbReference>
<dbReference type="InterPro" id="IPR000994">
    <property type="entry name" value="Pept_M24"/>
</dbReference>
<dbReference type="InterPro" id="IPR050659">
    <property type="entry name" value="Peptidase_M24B"/>
</dbReference>
<dbReference type="InterPro" id="IPR001131">
    <property type="entry name" value="Peptidase_M24B_aminopep-P_CS"/>
</dbReference>
<dbReference type="PANTHER" id="PTHR46112">
    <property type="entry name" value="AMINOPEPTIDASE"/>
    <property type="match status" value="1"/>
</dbReference>
<dbReference type="PANTHER" id="PTHR46112:SF3">
    <property type="entry name" value="AMINOPEPTIDASE YPDF"/>
    <property type="match status" value="1"/>
</dbReference>
<dbReference type="Pfam" id="PF01321">
    <property type="entry name" value="Creatinase_N"/>
    <property type="match status" value="1"/>
</dbReference>
<dbReference type="Pfam" id="PF00557">
    <property type="entry name" value="Peptidase_M24"/>
    <property type="match status" value="1"/>
</dbReference>
<dbReference type="SUPFAM" id="SSF55920">
    <property type="entry name" value="Creatinase/aminopeptidase"/>
    <property type="match status" value="1"/>
</dbReference>
<dbReference type="SUPFAM" id="SSF53092">
    <property type="entry name" value="Creatinase/prolidase N-terminal domain"/>
    <property type="match status" value="1"/>
</dbReference>
<dbReference type="PROSITE" id="PS00491">
    <property type="entry name" value="PROLINE_PEPTIDASE"/>
    <property type="match status" value="1"/>
</dbReference>
<sequence length="375" mass="39440">MGSRRFDAEVYARRLALAAAATADAGLAGLVITPGYDLCYLIGSRAETFERLTALVLPAAGAPAVVLPRLELAALKQSAAAELGLRVCDWVDGDDPYGLVSAVLGGAPVATAVTDSMPALHMLPLADALGVLPVLATDVLRRLRMVKEETEIDALRKAGAAIDRVHARVPEFLVPGRTEADVAADIAEAIVAEGHSEVAFVIVGSGPHGADPHHGYSDRELREGDIVVVDIGGTYGPGYHSDSTRTYSIGEPDSDVAQSYSMLQRAQRAAFEAIRPGVTAEQVDAAARDVLAEAGLAEYFVHRTGHGIGLCVHEEPYIVAGNDLVLVPGMAFSIEPGIYFPGRWGARIEDIVIVTEDGAVSVNNCPHELIVVPVS</sequence>
<reference key="1">
    <citation type="journal article" date="2002" name="J. Bacteriol.">
        <title>Whole-genome comparison of Mycobacterium tuberculosis clinical and laboratory strains.</title>
        <authorList>
            <person name="Fleischmann R.D."/>
            <person name="Alland D."/>
            <person name="Eisen J.A."/>
            <person name="Carpenter L."/>
            <person name="White O."/>
            <person name="Peterson J.D."/>
            <person name="DeBoy R.T."/>
            <person name="Dodson R.J."/>
            <person name="Gwinn M.L."/>
            <person name="Haft D.H."/>
            <person name="Hickey E.K."/>
            <person name="Kolonay J.F."/>
            <person name="Nelson W.C."/>
            <person name="Umayam L.A."/>
            <person name="Ermolaeva M.D."/>
            <person name="Salzberg S.L."/>
            <person name="Delcher A."/>
            <person name="Utterback T.R."/>
            <person name="Weidman J.F."/>
            <person name="Khouri H.M."/>
            <person name="Gill J."/>
            <person name="Mikula A."/>
            <person name="Bishai W."/>
            <person name="Jacobs W.R. Jr."/>
            <person name="Venter J.C."/>
            <person name="Fraser C.M."/>
        </authorList>
    </citation>
    <scope>NUCLEOTIDE SEQUENCE [LARGE SCALE GENOMIC DNA]</scope>
    <source>
        <strain>CDC 1551 / Oshkosh</strain>
    </source>
</reference>
<organism>
    <name type="scientific">Mycobacterium tuberculosis (strain CDC 1551 / Oshkosh)</name>
    <dbReference type="NCBI Taxonomy" id="83331"/>
    <lineage>
        <taxon>Bacteria</taxon>
        <taxon>Bacillati</taxon>
        <taxon>Actinomycetota</taxon>
        <taxon>Actinomycetes</taxon>
        <taxon>Mycobacteriales</taxon>
        <taxon>Mycobacteriaceae</taxon>
        <taxon>Mycobacterium</taxon>
        <taxon>Mycobacterium tuberculosis complex</taxon>
    </lineage>
</organism>
<feature type="chain" id="PRO_0000428131" description="Probable dipeptidase PepE">
    <location>
        <begin position="1"/>
        <end position="375"/>
    </location>
</feature>
<feature type="transmembrane region" description="Helical" evidence="1">
    <location>
        <begin position="15"/>
        <end position="35"/>
    </location>
</feature>
<feature type="transmembrane region" description="Helical" evidence="1">
    <location>
        <begin position="55"/>
        <end position="75"/>
    </location>
</feature>
<feature type="binding site" evidence="1">
    <location>
        <position position="230"/>
    </location>
    <ligand>
        <name>Mn(2+)</name>
        <dbReference type="ChEBI" id="CHEBI:29035"/>
        <label>2</label>
    </ligand>
</feature>
<feature type="binding site" evidence="1">
    <location>
        <position position="242"/>
    </location>
    <ligand>
        <name>Mn(2+)</name>
        <dbReference type="ChEBI" id="CHEBI:29035"/>
        <label>1</label>
    </ligand>
</feature>
<feature type="binding site" evidence="1">
    <location>
        <position position="242"/>
    </location>
    <ligand>
        <name>Mn(2+)</name>
        <dbReference type="ChEBI" id="CHEBI:29035"/>
        <label>2</label>
    </ligand>
</feature>
<feature type="binding site" evidence="1">
    <location>
        <position position="306"/>
    </location>
    <ligand>
        <name>Mn(2+)</name>
        <dbReference type="ChEBI" id="CHEBI:29035"/>
        <label>1</label>
    </ligand>
</feature>
<feature type="binding site" evidence="1">
    <location>
        <position position="335"/>
    </location>
    <ligand>
        <name>Mn(2+)</name>
        <dbReference type="ChEBI" id="CHEBI:29035"/>
        <label>1</label>
    </ligand>
</feature>
<feature type="binding site" evidence="1">
    <location>
        <position position="349"/>
    </location>
    <ligand>
        <name>Mn(2+)</name>
        <dbReference type="ChEBI" id="CHEBI:29035"/>
        <label>1</label>
    </ligand>
</feature>
<feature type="binding site" evidence="1">
    <location>
        <position position="349"/>
    </location>
    <ligand>
        <name>Mn(2+)</name>
        <dbReference type="ChEBI" id="CHEBI:29035"/>
        <label>2</label>
    </ligand>
</feature>
<accession>P9WHS6</accession>
<accession>L0TBH5</accession>
<accession>P65810</accession>
<accession>Q10698</accession>
<keyword id="KW-1003">Cell membrane</keyword>
<keyword id="KW-0378">Hydrolase</keyword>
<keyword id="KW-0464">Manganese</keyword>
<keyword id="KW-0472">Membrane</keyword>
<keyword id="KW-0479">Metal-binding</keyword>
<keyword id="KW-1185">Reference proteome</keyword>
<keyword id="KW-0812">Transmembrane</keyword>
<keyword id="KW-1133">Transmembrane helix</keyword>
<name>PEPE_MYCTO</name>
<comment type="cofactor">
    <cofactor evidence="2">
        <name>Mn(2+)</name>
        <dbReference type="ChEBI" id="CHEBI:29035"/>
    </cofactor>
    <text evidence="2">Binds 2 manganese ions per subunit.</text>
</comment>
<comment type="subcellular location">
    <subcellularLocation>
        <location evidence="2">Cell membrane</location>
        <topology evidence="2">Multi-pass membrane protein</topology>
    </subcellularLocation>
</comment>
<comment type="similarity">
    <text evidence="2">Belongs to the peptidase M24B family.</text>
</comment>
<evidence type="ECO:0000255" key="1"/>
<evidence type="ECO:0000305" key="2"/>
<gene>
    <name type="primary">pepE</name>
    <name type="ordered locus">MT2150</name>
</gene>